<name>MTGA_SALA4</name>
<reference key="1">
    <citation type="journal article" date="2011" name="J. Bacteriol.">
        <title>Comparative genomics of 28 Salmonella enterica isolates: evidence for CRISPR-mediated adaptive sublineage evolution.</title>
        <authorList>
            <person name="Fricke W.F."/>
            <person name="Mammel M.K."/>
            <person name="McDermott P.F."/>
            <person name="Tartera C."/>
            <person name="White D.G."/>
            <person name="Leclerc J.E."/>
            <person name="Ravel J."/>
            <person name="Cebula T.A."/>
        </authorList>
    </citation>
    <scope>NUCLEOTIDE SEQUENCE [LARGE SCALE GENOMIC DNA]</scope>
    <source>
        <strain>SL483</strain>
    </source>
</reference>
<organism>
    <name type="scientific">Salmonella agona (strain SL483)</name>
    <dbReference type="NCBI Taxonomy" id="454166"/>
    <lineage>
        <taxon>Bacteria</taxon>
        <taxon>Pseudomonadati</taxon>
        <taxon>Pseudomonadota</taxon>
        <taxon>Gammaproteobacteria</taxon>
        <taxon>Enterobacterales</taxon>
        <taxon>Enterobacteriaceae</taxon>
        <taxon>Salmonella</taxon>
    </lineage>
</organism>
<keyword id="KW-0997">Cell inner membrane</keyword>
<keyword id="KW-1003">Cell membrane</keyword>
<keyword id="KW-0133">Cell shape</keyword>
<keyword id="KW-0961">Cell wall biogenesis/degradation</keyword>
<keyword id="KW-0328">Glycosyltransferase</keyword>
<keyword id="KW-0472">Membrane</keyword>
<keyword id="KW-0573">Peptidoglycan synthesis</keyword>
<keyword id="KW-0808">Transferase</keyword>
<keyword id="KW-0812">Transmembrane</keyword>
<keyword id="KW-1133">Transmembrane helix</keyword>
<comment type="function">
    <text evidence="1">Peptidoglycan polymerase that catalyzes glycan chain elongation from lipid-linked precursors.</text>
</comment>
<comment type="catalytic activity">
    <reaction evidence="1">
        <text>[GlcNAc-(1-&gt;4)-Mur2Ac(oyl-L-Ala-gamma-D-Glu-L-Lys-D-Ala-D-Ala)](n)-di-trans,octa-cis-undecaprenyl diphosphate + beta-D-GlcNAc-(1-&gt;4)-Mur2Ac(oyl-L-Ala-gamma-D-Glu-L-Lys-D-Ala-D-Ala)-di-trans,octa-cis-undecaprenyl diphosphate = [GlcNAc-(1-&gt;4)-Mur2Ac(oyl-L-Ala-gamma-D-Glu-L-Lys-D-Ala-D-Ala)](n+1)-di-trans,octa-cis-undecaprenyl diphosphate + di-trans,octa-cis-undecaprenyl diphosphate + H(+)</text>
        <dbReference type="Rhea" id="RHEA:23708"/>
        <dbReference type="Rhea" id="RHEA-COMP:9602"/>
        <dbReference type="Rhea" id="RHEA-COMP:9603"/>
        <dbReference type="ChEBI" id="CHEBI:15378"/>
        <dbReference type="ChEBI" id="CHEBI:58405"/>
        <dbReference type="ChEBI" id="CHEBI:60033"/>
        <dbReference type="ChEBI" id="CHEBI:78435"/>
        <dbReference type="EC" id="2.4.99.28"/>
    </reaction>
</comment>
<comment type="pathway">
    <text evidence="1">Cell wall biogenesis; peptidoglycan biosynthesis.</text>
</comment>
<comment type="subcellular location">
    <subcellularLocation>
        <location evidence="1">Cell inner membrane</location>
        <topology evidence="1">Single-pass membrane protein</topology>
    </subcellularLocation>
</comment>
<comment type="similarity">
    <text evidence="1">Belongs to the glycosyltransferase 51 family.</text>
</comment>
<accession>B5F6X7</accession>
<feature type="chain" id="PRO_1000133604" description="Biosynthetic peptidoglycan transglycosylase">
    <location>
        <begin position="1"/>
        <end position="242"/>
    </location>
</feature>
<feature type="transmembrane region" description="Helical" evidence="1">
    <location>
        <begin position="19"/>
        <end position="39"/>
    </location>
</feature>
<dbReference type="EC" id="2.4.99.28" evidence="1"/>
<dbReference type="EMBL" id="CP001138">
    <property type="protein sequence ID" value="ACH51115.1"/>
    <property type="molecule type" value="Genomic_DNA"/>
</dbReference>
<dbReference type="RefSeq" id="WP_000044645.1">
    <property type="nucleotide sequence ID" value="NC_011149.1"/>
</dbReference>
<dbReference type="SMR" id="B5F6X7"/>
<dbReference type="CAZy" id="GT51">
    <property type="family name" value="Glycosyltransferase Family 51"/>
</dbReference>
<dbReference type="KEGG" id="sea:SeAg_B3516"/>
<dbReference type="HOGENOM" id="CLU_006354_1_1_6"/>
<dbReference type="UniPathway" id="UPA00219"/>
<dbReference type="Proteomes" id="UP000008819">
    <property type="component" value="Chromosome"/>
</dbReference>
<dbReference type="GO" id="GO:0009274">
    <property type="term" value="C:peptidoglycan-based cell wall"/>
    <property type="evidence" value="ECO:0007669"/>
    <property type="project" value="InterPro"/>
</dbReference>
<dbReference type="GO" id="GO:0005886">
    <property type="term" value="C:plasma membrane"/>
    <property type="evidence" value="ECO:0007669"/>
    <property type="project" value="UniProtKB-SubCell"/>
</dbReference>
<dbReference type="GO" id="GO:0016763">
    <property type="term" value="F:pentosyltransferase activity"/>
    <property type="evidence" value="ECO:0007669"/>
    <property type="project" value="InterPro"/>
</dbReference>
<dbReference type="GO" id="GO:0008955">
    <property type="term" value="F:peptidoglycan glycosyltransferase activity"/>
    <property type="evidence" value="ECO:0007669"/>
    <property type="project" value="UniProtKB-UniRule"/>
</dbReference>
<dbReference type="GO" id="GO:0071555">
    <property type="term" value="P:cell wall organization"/>
    <property type="evidence" value="ECO:0007669"/>
    <property type="project" value="UniProtKB-KW"/>
</dbReference>
<dbReference type="GO" id="GO:0009252">
    <property type="term" value="P:peptidoglycan biosynthetic process"/>
    <property type="evidence" value="ECO:0007669"/>
    <property type="project" value="UniProtKB-UniRule"/>
</dbReference>
<dbReference type="GO" id="GO:0008360">
    <property type="term" value="P:regulation of cell shape"/>
    <property type="evidence" value="ECO:0007669"/>
    <property type="project" value="UniProtKB-KW"/>
</dbReference>
<dbReference type="Gene3D" id="1.10.3810.10">
    <property type="entry name" value="Biosynthetic peptidoglycan transglycosylase-like"/>
    <property type="match status" value="1"/>
</dbReference>
<dbReference type="HAMAP" id="MF_00766">
    <property type="entry name" value="PGT_MtgA"/>
    <property type="match status" value="1"/>
</dbReference>
<dbReference type="InterPro" id="IPR001264">
    <property type="entry name" value="Glyco_trans_51"/>
</dbReference>
<dbReference type="InterPro" id="IPR023346">
    <property type="entry name" value="Lysozyme-like_dom_sf"/>
</dbReference>
<dbReference type="InterPro" id="IPR036950">
    <property type="entry name" value="PBP_transglycosylase"/>
</dbReference>
<dbReference type="InterPro" id="IPR011812">
    <property type="entry name" value="Pep_trsgly"/>
</dbReference>
<dbReference type="NCBIfam" id="TIGR02070">
    <property type="entry name" value="mono_pep_trsgly"/>
    <property type="match status" value="1"/>
</dbReference>
<dbReference type="PANTHER" id="PTHR30400:SF0">
    <property type="entry name" value="BIOSYNTHETIC PEPTIDOGLYCAN TRANSGLYCOSYLASE"/>
    <property type="match status" value="1"/>
</dbReference>
<dbReference type="PANTHER" id="PTHR30400">
    <property type="entry name" value="MONOFUNCTIONAL BIOSYNTHETIC PEPTIDOGLYCAN TRANSGLYCOSYLASE"/>
    <property type="match status" value="1"/>
</dbReference>
<dbReference type="Pfam" id="PF00912">
    <property type="entry name" value="Transgly"/>
    <property type="match status" value="1"/>
</dbReference>
<dbReference type="SUPFAM" id="SSF53955">
    <property type="entry name" value="Lysozyme-like"/>
    <property type="match status" value="1"/>
</dbReference>
<evidence type="ECO:0000255" key="1">
    <source>
        <dbReference type="HAMAP-Rule" id="MF_00766"/>
    </source>
</evidence>
<proteinExistence type="inferred from homology"/>
<gene>
    <name evidence="1" type="primary">mtgA</name>
    <name type="ordered locus">SeAg_B3516</name>
</gene>
<sequence length="242" mass="27061">MSKRRIAPLTFLRRLLLRILAALAVFWGGGIALFSVVPVPFSAVMAERQISAWLGGEFGYVAHSDWVSMADISPWMGLAVIAAEDQKFPEHWGFDVPAIEKALAHNERNESRIRGASTLSQQTAKNLFLWDGRSWLRKGLEAGLTLGIETVWSKKRILTVYLNIAEFGDGIFGVEAAAQRYFHKPASRLNMSEAALLAAVLPNPLRYKANAPSGYVRSRQAWIMRQMRQLGGESFMTRNQLN</sequence>
<protein>
    <recommendedName>
        <fullName evidence="1">Biosynthetic peptidoglycan transglycosylase</fullName>
        <ecNumber evidence="1">2.4.99.28</ecNumber>
    </recommendedName>
    <alternativeName>
        <fullName evidence="1">Glycan polymerase</fullName>
    </alternativeName>
    <alternativeName>
        <fullName evidence="1">Peptidoglycan glycosyltransferase MtgA</fullName>
        <shortName evidence="1">PGT</shortName>
    </alternativeName>
</protein>